<dbReference type="EC" id="2.8.1.-" evidence="1"/>
<dbReference type="EMBL" id="CP001657">
    <property type="protein sequence ID" value="ACT14848.1"/>
    <property type="molecule type" value="Genomic_DNA"/>
</dbReference>
<dbReference type="RefSeq" id="WP_015841933.1">
    <property type="nucleotide sequence ID" value="NC_012917.1"/>
</dbReference>
<dbReference type="SMR" id="C6DG85"/>
<dbReference type="STRING" id="561230.PC1_3833"/>
<dbReference type="GeneID" id="67792270"/>
<dbReference type="KEGG" id="pct:PC1_3833"/>
<dbReference type="eggNOG" id="COG1553">
    <property type="taxonomic scope" value="Bacteria"/>
</dbReference>
<dbReference type="HOGENOM" id="CLU_132095_0_0_6"/>
<dbReference type="OrthoDB" id="9787483at2"/>
<dbReference type="Proteomes" id="UP000002736">
    <property type="component" value="Chromosome"/>
</dbReference>
<dbReference type="GO" id="GO:1990228">
    <property type="term" value="C:sulfurtransferase complex"/>
    <property type="evidence" value="ECO:0007669"/>
    <property type="project" value="TreeGrafter"/>
</dbReference>
<dbReference type="GO" id="GO:0097163">
    <property type="term" value="F:sulfur carrier activity"/>
    <property type="evidence" value="ECO:0007669"/>
    <property type="project" value="TreeGrafter"/>
</dbReference>
<dbReference type="GO" id="GO:0016783">
    <property type="term" value="F:sulfurtransferase activity"/>
    <property type="evidence" value="ECO:0007669"/>
    <property type="project" value="UniProtKB-UniRule"/>
</dbReference>
<dbReference type="GO" id="GO:0002143">
    <property type="term" value="P:tRNA wobble position uridine thiolation"/>
    <property type="evidence" value="ECO:0007669"/>
    <property type="project" value="TreeGrafter"/>
</dbReference>
<dbReference type="FunFam" id="3.40.1260.10:FF:000001">
    <property type="entry name" value="Sulfurtransferase TusD"/>
    <property type="match status" value="1"/>
</dbReference>
<dbReference type="Gene3D" id="3.40.1260.10">
    <property type="entry name" value="DsrEFH-like"/>
    <property type="match status" value="1"/>
</dbReference>
<dbReference type="HAMAP" id="MF_00390">
    <property type="entry name" value="Thiourid_synth_D"/>
    <property type="match status" value="1"/>
</dbReference>
<dbReference type="InterPro" id="IPR027396">
    <property type="entry name" value="DsrEFH-like"/>
</dbReference>
<dbReference type="InterPro" id="IPR003787">
    <property type="entry name" value="Sulphur_relay_DsrE/F-like"/>
</dbReference>
<dbReference type="InterPro" id="IPR017463">
    <property type="entry name" value="Sulphur_relay_TusD/DsrE"/>
</dbReference>
<dbReference type="NCBIfam" id="NF001237">
    <property type="entry name" value="PRK00207.1"/>
    <property type="match status" value="1"/>
</dbReference>
<dbReference type="NCBIfam" id="TIGR03012">
    <property type="entry name" value="sulf_tusD_dsrE"/>
    <property type="match status" value="1"/>
</dbReference>
<dbReference type="PANTHER" id="PTHR34874">
    <property type="entry name" value="PROTEIN YCHN"/>
    <property type="match status" value="1"/>
</dbReference>
<dbReference type="PANTHER" id="PTHR34874:SF3">
    <property type="entry name" value="SULFURTRANSFERASE TUSD"/>
    <property type="match status" value="1"/>
</dbReference>
<dbReference type="Pfam" id="PF02635">
    <property type="entry name" value="DsrE"/>
    <property type="match status" value="1"/>
</dbReference>
<dbReference type="SUPFAM" id="SSF75169">
    <property type="entry name" value="DsrEFH-like"/>
    <property type="match status" value="1"/>
</dbReference>
<proteinExistence type="inferred from homology"/>
<name>TUSD_PECCP</name>
<comment type="function">
    <text evidence="1">Part of a sulfur-relay system required for 2-thiolation of 5-methylaminomethyl-2-thiouridine (mnm(5)s(2)U) at tRNA wobble positions. Accepts sulfur from TusA and transfers it in turn to TusE.</text>
</comment>
<comment type="subunit">
    <text evidence="1">Heterohexamer, formed by a dimer of trimers. The hexameric TusBCD complex contains 2 copies each of TusB, TusC and TusD. The TusBCD complex interacts with TusE.</text>
</comment>
<comment type="subcellular location">
    <subcellularLocation>
        <location evidence="1">Cytoplasm</location>
    </subcellularLocation>
</comment>
<comment type="similarity">
    <text evidence="1">Belongs to the DsrE/TusD family.</text>
</comment>
<keyword id="KW-0963">Cytoplasm</keyword>
<keyword id="KW-0808">Transferase</keyword>
<keyword id="KW-0819">tRNA processing</keyword>
<accession>C6DG85</accession>
<organism>
    <name type="scientific">Pectobacterium carotovorum subsp. carotovorum (strain PC1)</name>
    <dbReference type="NCBI Taxonomy" id="561230"/>
    <lineage>
        <taxon>Bacteria</taxon>
        <taxon>Pseudomonadati</taxon>
        <taxon>Pseudomonadota</taxon>
        <taxon>Gammaproteobacteria</taxon>
        <taxon>Enterobacterales</taxon>
        <taxon>Pectobacteriaceae</taxon>
        <taxon>Pectobacterium</taxon>
    </lineage>
</organism>
<gene>
    <name evidence="1" type="primary">tusD</name>
    <name type="ordered locus">PC1_3833</name>
</gene>
<feature type="chain" id="PRO_1000205815" description="Sulfurtransferase TusD">
    <location>
        <begin position="1"/>
        <end position="129"/>
    </location>
</feature>
<feature type="active site" description="Cysteine persulfide intermediate" evidence="1">
    <location>
        <position position="79"/>
    </location>
</feature>
<sequence length="129" mass="13822">MLSYCLLVTGPAYGTQQASSALQFAQALLAEGHRLKSVFFYREGVLNANQLTSPANDEFDLVRAWQLLGETHQVALNVCVAAALRRGVTDAQQAAQLNLAGANLQPGFVLSGLGELAQSVLTCDRVIQF</sequence>
<protein>
    <recommendedName>
        <fullName evidence="1">Sulfurtransferase TusD</fullName>
        <ecNumber evidence="1">2.8.1.-</ecNumber>
    </recommendedName>
    <alternativeName>
        <fullName evidence="1">tRNA 2-thiouridine synthesizing protein D</fullName>
    </alternativeName>
</protein>
<evidence type="ECO:0000255" key="1">
    <source>
        <dbReference type="HAMAP-Rule" id="MF_00390"/>
    </source>
</evidence>
<reference key="1">
    <citation type="submission" date="2009-07" db="EMBL/GenBank/DDBJ databases">
        <title>Complete sequence of Pectobacterium carotovorum subsp. carotovorum PC1.</title>
        <authorList>
            <consortium name="US DOE Joint Genome Institute"/>
            <person name="Lucas S."/>
            <person name="Copeland A."/>
            <person name="Lapidus A."/>
            <person name="Glavina del Rio T."/>
            <person name="Tice H."/>
            <person name="Bruce D."/>
            <person name="Goodwin L."/>
            <person name="Pitluck S."/>
            <person name="Munk A.C."/>
            <person name="Brettin T."/>
            <person name="Detter J.C."/>
            <person name="Han C."/>
            <person name="Tapia R."/>
            <person name="Larimer F."/>
            <person name="Land M."/>
            <person name="Hauser L."/>
            <person name="Kyrpides N."/>
            <person name="Mikhailova N."/>
            <person name="Balakrishnan V."/>
            <person name="Glasner J."/>
            <person name="Perna N.T."/>
        </authorList>
    </citation>
    <scope>NUCLEOTIDE SEQUENCE [LARGE SCALE GENOMIC DNA]</scope>
    <source>
        <strain>PC1</strain>
    </source>
</reference>